<protein>
    <recommendedName>
        <fullName evidence="1">3-isopropylmalate dehydratase large subunit</fullName>
        <ecNumber evidence="1">4.2.1.33</ecNumber>
    </recommendedName>
    <alternativeName>
        <fullName evidence="1">Alpha-IPM isomerase</fullName>
        <shortName evidence="1">IPMI</shortName>
    </alternativeName>
    <alternativeName>
        <fullName evidence="1">Isopropylmalate isomerase</fullName>
    </alternativeName>
</protein>
<gene>
    <name evidence="1" type="primary">leuC</name>
    <name type="ordered locus">PD_1399</name>
</gene>
<keyword id="KW-0004">4Fe-4S</keyword>
<keyword id="KW-0028">Amino-acid biosynthesis</keyword>
<keyword id="KW-0100">Branched-chain amino acid biosynthesis</keyword>
<keyword id="KW-0408">Iron</keyword>
<keyword id="KW-0411">Iron-sulfur</keyword>
<keyword id="KW-0432">Leucine biosynthesis</keyword>
<keyword id="KW-0456">Lyase</keyword>
<keyword id="KW-0479">Metal-binding</keyword>
<keyword id="KW-1185">Reference proteome</keyword>
<feature type="chain" id="PRO_0000076847" description="3-isopropylmalate dehydratase large subunit">
    <location>
        <begin position="1"/>
        <end position="474"/>
    </location>
</feature>
<feature type="binding site" evidence="1">
    <location>
        <position position="353"/>
    </location>
    <ligand>
        <name>[4Fe-4S] cluster</name>
        <dbReference type="ChEBI" id="CHEBI:49883"/>
    </ligand>
</feature>
<feature type="binding site" evidence="1">
    <location>
        <position position="414"/>
    </location>
    <ligand>
        <name>[4Fe-4S] cluster</name>
        <dbReference type="ChEBI" id="CHEBI:49883"/>
    </ligand>
</feature>
<feature type="binding site" evidence="1">
    <location>
        <position position="417"/>
    </location>
    <ligand>
        <name>[4Fe-4S] cluster</name>
        <dbReference type="ChEBI" id="CHEBI:49883"/>
    </ligand>
</feature>
<proteinExistence type="inferred from homology"/>
<reference key="1">
    <citation type="journal article" date="2003" name="J. Bacteriol.">
        <title>Comparative analyses of the complete genome sequences of Pierce's disease and citrus variegated chlorosis strains of Xylella fastidiosa.</title>
        <authorList>
            <person name="Van Sluys M.A."/>
            <person name="de Oliveira M.C."/>
            <person name="Monteiro-Vitorello C.B."/>
            <person name="Miyaki C.Y."/>
            <person name="Furlan L.R."/>
            <person name="Camargo L.E.A."/>
            <person name="da Silva A.C.R."/>
            <person name="Moon D.H."/>
            <person name="Takita M.A."/>
            <person name="Lemos E.G.M."/>
            <person name="Machado M.A."/>
            <person name="Ferro M.I.T."/>
            <person name="da Silva F.R."/>
            <person name="Goldman M.H.S."/>
            <person name="Goldman G.H."/>
            <person name="Lemos M.V.F."/>
            <person name="El-Dorry H."/>
            <person name="Tsai S.M."/>
            <person name="Carrer H."/>
            <person name="Carraro D.M."/>
            <person name="de Oliveira R.C."/>
            <person name="Nunes L.R."/>
            <person name="Siqueira W.J."/>
            <person name="Coutinho L.L."/>
            <person name="Kimura E.T."/>
            <person name="Ferro E.S."/>
            <person name="Harakava R."/>
            <person name="Kuramae E.E."/>
            <person name="Marino C.L."/>
            <person name="Giglioti E."/>
            <person name="Abreu I.L."/>
            <person name="Alves L.M.C."/>
            <person name="do Amaral A.M."/>
            <person name="Baia G.S."/>
            <person name="Blanco S.R."/>
            <person name="Brito M.S."/>
            <person name="Cannavan F.S."/>
            <person name="Celestino A.V."/>
            <person name="da Cunha A.F."/>
            <person name="Fenille R.C."/>
            <person name="Ferro J.A."/>
            <person name="Formighieri E.F."/>
            <person name="Kishi L.T."/>
            <person name="Leoni S.G."/>
            <person name="Oliveira A.R."/>
            <person name="Rosa V.E. Jr."/>
            <person name="Sassaki F.T."/>
            <person name="Sena J.A.D."/>
            <person name="de Souza A.A."/>
            <person name="Truffi D."/>
            <person name="Tsukumo F."/>
            <person name="Yanai G.M."/>
            <person name="Zaros L.G."/>
            <person name="Civerolo E.L."/>
            <person name="Simpson A.J.G."/>
            <person name="Almeida N.F. Jr."/>
            <person name="Setubal J.C."/>
            <person name="Kitajima J.P."/>
        </authorList>
    </citation>
    <scope>NUCLEOTIDE SEQUENCE [LARGE SCALE GENOMIC DNA]</scope>
    <source>
        <strain>Temecula1 / ATCC 700964</strain>
    </source>
</reference>
<accession>Q87BP9</accession>
<name>LEUC_XYLFT</name>
<comment type="function">
    <text evidence="1">Catalyzes the isomerization between 2-isopropylmalate and 3-isopropylmalate, via the formation of 2-isopropylmaleate.</text>
</comment>
<comment type="catalytic activity">
    <reaction evidence="1">
        <text>(2R,3S)-3-isopropylmalate = (2S)-2-isopropylmalate</text>
        <dbReference type="Rhea" id="RHEA:32287"/>
        <dbReference type="ChEBI" id="CHEBI:1178"/>
        <dbReference type="ChEBI" id="CHEBI:35121"/>
        <dbReference type="EC" id="4.2.1.33"/>
    </reaction>
</comment>
<comment type="cofactor">
    <cofactor evidence="1">
        <name>[4Fe-4S] cluster</name>
        <dbReference type="ChEBI" id="CHEBI:49883"/>
    </cofactor>
    <text evidence="1">Binds 1 [4Fe-4S] cluster per subunit.</text>
</comment>
<comment type="pathway">
    <text evidence="1">Amino-acid biosynthesis; L-leucine biosynthesis; L-leucine from 3-methyl-2-oxobutanoate: step 2/4.</text>
</comment>
<comment type="subunit">
    <text evidence="1">Heterodimer of LeuC and LeuD.</text>
</comment>
<comment type="similarity">
    <text evidence="1">Belongs to the aconitase/IPM isomerase family. LeuC type 1 subfamily.</text>
</comment>
<sequence length="474" mass="51153">MAGKTLYGKLWDIHEVARRDDGSSLIYIDRHILHEVTSPQAFEGLRLAGRPLWRVNANIATPDHNVPTTKAERQGSLLSIADTVSRLQVQTLDENCDDFGIFEFKMNDVRQGIVHVIGPEQGATLPGMTVVCGDSHTSTHGAFGALAHGIGTSEVEHVLATQCLVTQKMKNMQVRVEGTLPWGVTAKDIVLALIGKIGTAGGNGYAVEFSGSTIRALSMEGRMTICNMAIEAGARVGMVAVDEKTIQYVHGRPFAPKGSDWDAAVAFWRGLVSDPDAHFDRVVELSAEEIKPQVTWGTSPEMVSAVDQSVPDPERETDPVKKESLIRALKYMGLQPNDPITSIKLDRVFIGSCTNSRIEDLRAAAEVVKGRKVASTVKQAMVVPGSGLVKAQAEVEGLDKIFIEAGFEWREPGCSMCLAMNPDKLGSGEHCASTSNRNFEGRQGIGGRTHLVSPAMAAAAAVAGHFVDVREMMR</sequence>
<dbReference type="EC" id="4.2.1.33" evidence="1"/>
<dbReference type="EMBL" id="AE009442">
    <property type="protein sequence ID" value="AAO29246.1"/>
    <property type="molecule type" value="Genomic_DNA"/>
</dbReference>
<dbReference type="RefSeq" id="WP_004091001.1">
    <property type="nucleotide sequence ID" value="NC_004556.1"/>
</dbReference>
<dbReference type="SMR" id="Q87BP9"/>
<dbReference type="GeneID" id="93905215"/>
<dbReference type="KEGG" id="xft:PD_1399"/>
<dbReference type="HOGENOM" id="CLU_006714_3_4_6"/>
<dbReference type="UniPathway" id="UPA00048">
    <property type="reaction ID" value="UER00071"/>
</dbReference>
<dbReference type="Proteomes" id="UP000002516">
    <property type="component" value="Chromosome"/>
</dbReference>
<dbReference type="GO" id="GO:0003861">
    <property type="term" value="F:3-isopropylmalate dehydratase activity"/>
    <property type="evidence" value="ECO:0007669"/>
    <property type="project" value="UniProtKB-UniRule"/>
</dbReference>
<dbReference type="GO" id="GO:0051539">
    <property type="term" value="F:4 iron, 4 sulfur cluster binding"/>
    <property type="evidence" value="ECO:0007669"/>
    <property type="project" value="UniProtKB-KW"/>
</dbReference>
<dbReference type="GO" id="GO:0046872">
    <property type="term" value="F:metal ion binding"/>
    <property type="evidence" value="ECO:0007669"/>
    <property type="project" value="UniProtKB-KW"/>
</dbReference>
<dbReference type="GO" id="GO:0009098">
    <property type="term" value="P:L-leucine biosynthetic process"/>
    <property type="evidence" value="ECO:0007669"/>
    <property type="project" value="UniProtKB-UniRule"/>
</dbReference>
<dbReference type="CDD" id="cd01583">
    <property type="entry name" value="IPMI"/>
    <property type="match status" value="1"/>
</dbReference>
<dbReference type="FunFam" id="3.30.499.10:FF:000007">
    <property type="entry name" value="3-isopropylmalate dehydratase large subunit"/>
    <property type="match status" value="1"/>
</dbReference>
<dbReference type="Gene3D" id="3.30.499.10">
    <property type="entry name" value="Aconitase, domain 3"/>
    <property type="match status" value="2"/>
</dbReference>
<dbReference type="HAMAP" id="MF_01026">
    <property type="entry name" value="LeuC_type1"/>
    <property type="match status" value="1"/>
</dbReference>
<dbReference type="InterPro" id="IPR004430">
    <property type="entry name" value="3-IsopropMal_deHydase_lsu"/>
</dbReference>
<dbReference type="InterPro" id="IPR015931">
    <property type="entry name" value="Acnase/IPM_dHydase_lsu_aba_1/3"/>
</dbReference>
<dbReference type="InterPro" id="IPR001030">
    <property type="entry name" value="Acoase/IPM_deHydtase_lsu_aba"/>
</dbReference>
<dbReference type="InterPro" id="IPR018136">
    <property type="entry name" value="Aconitase_4Fe-4S_BS"/>
</dbReference>
<dbReference type="InterPro" id="IPR036008">
    <property type="entry name" value="Aconitase_4Fe-4S_dom"/>
</dbReference>
<dbReference type="InterPro" id="IPR050067">
    <property type="entry name" value="IPM_dehydratase_rel_enz"/>
</dbReference>
<dbReference type="InterPro" id="IPR033941">
    <property type="entry name" value="IPMI_cat"/>
</dbReference>
<dbReference type="NCBIfam" id="TIGR00170">
    <property type="entry name" value="leuC"/>
    <property type="match status" value="1"/>
</dbReference>
<dbReference type="NCBIfam" id="NF004016">
    <property type="entry name" value="PRK05478.1"/>
    <property type="match status" value="1"/>
</dbReference>
<dbReference type="NCBIfam" id="NF009116">
    <property type="entry name" value="PRK12466.1"/>
    <property type="match status" value="1"/>
</dbReference>
<dbReference type="PANTHER" id="PTHR43822:SF9">
    <property type="entry name" value="3-ISOPROPYLMALATE DEHYDRATASE"/>
    <property type="match status" value="1"/>
</dbReference>
<dbReference type="PANTHER" id="PTHR43822">
    <property type="entry name" value="HOMOACONITASE, MITOCHONDRIAL-RELATED"/>
    <property type="match status" value="1"/>
</dbReference>
<dbReference type="Pfam" id="PF00330">
    <property type="entry name" value="Aconitase"/>
    <property type="match status" value="1"/>
</dbReference>
<dbReference type="PRINTS" id="PR00415">
    <property type="entry name" value="ACONITASE"/>
</dbReference>
<dbReference type="SUPFAM" id="SSF53732">
    <property type="entry name" value="Aconitase iron-sulfur domain"/>
    <property type="match status" value="1"/>
</dbReference>
<dbReference type="PROSITE" id="PS00450">
    <property type="entry name" value="ACONITASE_1"/>
    <property type="match status" value="1"/>
</dbReference>
<dbReference type="PROSITE" id="PS01244">
    <property type="entry name" value="ACONITASE_2"/>
    <property type="match status" value="1"/>
</dbReference>
<organism>
    <name type="scientific">Xylella fastidiosa (strain Temecula1 / ATCC 700964)</name>
    <dbReference type="NCBI Taxonomy" id="183190"/>
    <lineage>
        <taxon>Bacteria</taxon>
        <taxon>Pseudomonadati</taxon>
        <taxon>Pseudomonadota</taxon>
        <taxon>Gammaproteobacteria</taxon>
        <taxon>Lysobacterales</taxon>
        <taxon>Lysobacteraceae</taxon>
        <taxon>Xylella</taxon>
    </lineage>
</organism>
<evidence type="ECO:0000255" key="1">
    <source>
        <dbReference type="HAMAP-Rule" id="MF_01026"/>
    </source>
</evidence>